<name>DPOL_HPBDB</name>
<feature type="chain" id="PRO_0000222329" description="Protein P">
    <location>
        <begin position="1"/>
        <end position="788"/>
    </location>
</feature>
<feature type="domain" description="Reverse transcriptase" evidence="2">
    <location>
        <begin position="376"/>
        <end position="565"/>
    </location>
</feature>
<feature type="region of interest" description="Terminal protein domain (TP)" evidence="1">
    <location>
        <begin position="1"/>
        <end position="200"/>
    </location>
</feature>
<feature type="region of interest" description="Spacer" evidence="1">
    <location>
        <begin position="201"/>
        <end position="365"/>
    </location>
</feature>
<feature type="region of interest" description="Disordered" evidence="3">
    <location>
        <begin position="211"/>
        <end position="244"/>
    </location>
</feature>
<feature type="region of interest" description="Disordered" evidence="3">
    <location>
        <begin position="286"/>
        <end position="373"/>
    </location>
</feature>
<feature type="region of interest" description="Polymerase/reverse transcriptase domain (RT)" evidence="1">
    <location>
        <begin position="366"/>
        <end position="655"/>
    </location>
</feature>
<feature type="region of interest" description="RnaseH domain (RH)" evidence="1">
    <location>
        <begin position="656"/>
        <end position="788"/>
    </location>
</feature>
<feature type="compositionally biased region" description="Polar residues" evidence="3">
    <location>
        <begin position="286"/>
        <end position="298"/>
    </location>
</feature>
<feature type="compositionally biased region" description="Polar residues" evidence="3">
    <location>
        <begin position="326"/>
        <end position="351"/>
    </location>
</feature>
<feature type="compositionally biased region" description="Basic and acidic residues" evidence="3">
    <location>
        <begin position="363"/>
        <end position="373"/>
    </location>
</feature>
<feature type="binding site" evidence="2">
    <location>
        <position position="448"/>
    </location>
    <ligand>
        <name>Mg(2+)</name>
        <dbReference type="ChEBI" id="CHEBI:18420"/>
        <note>catalytic</note>
    </ligand>
</feature>
<feature type="binding site" evidence="2">
    <location>
        <position position="515"/>
    </location>
    <ligand>
        <name>Mg(2+)</name>
        <dbReference type="ChEBI" id="CHEBI:18420"/>
        <note>catalytic</note>
    </ligand>
</feature>
<feature type="binding site" evidence="2">
    <location>
        <position position="516"/>
    </location>
    <ligand>
        <name>Mg(2+)</name>
        <dbReference type="ChEBI" id="CHEBI:18420"/>
        <note>catalytic</note>
    </ligand>
</feature>
<feature type="site" description="Priming of reverse-transcription by covalently linking the first nucleotide of the (-)DNA" evidence="1">
    <location>
        <position position="96"/>
    </location>
</feature>
<protein>
    <recommendedName>
        <fullName>Protein P</fullName>
    </recommendedName>
    <domain>
        <recommendedName>
            <fullName>DNA-directed DNA polymerase</fullName>
            <ecNumber>2.7.7.7</ecNumber>
        </recommendedName>
    </domain>
    <domain>
        <recommendedName>
            <fullName>RNA-directed DNA polymerase</fullName>
            <ecNumber>2.7.7.49</ecNumber>
        </recommendedName>
    </domain>
    <domain>
        <recommendedName>
            <fullName>Ribonuclease H</fullName>
            <ecNumber>3.1.26.4</ecNumber>
        </recommendedName>
    </domain>
</protein>
<organism>
    <name type="scientific">Duck hepatitis B virus (isolate brown Shanghai duck S5)</name>
    <name type="common">DHBV</name>
    <dbReference type="NCBI Taxonomy" id="10439"/>
    <lineage>
        <taxon>Viruses</taxon>
        <taxon>Riboviria</taxon>
        <taxon>Pararnavirae</taxon>
        <taxon>Artverviricota</taxon>
        <taxon>Revtraviricetes</taxon>
        <taxon>Blubervirales</taxon>
        <taxon>Hepadnaviridae</taxon>
        <taxon>Avihepadnavirus</taxon>
        <taxon>Duck hepatitis B virus</taxon>
    </lineage>
</organism>
<reference key="1">
    <citation type="journal article" date="1989" name="Virology">
        <title>Molecular cloning and sequence analysis of duck hepatitis B virus genomes of a new variant isolated from Shanghai ducks.</title>
        <authorList>
            <person name="Uchida M."/>
            <person name="Esumi M."/>
            <person name="Shikata T."/>
        </authorList>
    </citation>
    <scope>NUCLEOTIDE SEQUENCE [GENOMIC DNA]</scope>
</reference>
<reference key="2">
    <citation type="journal article" date="2007" name="World J. Gastroenterol.">
        <title>Hepatitis B virus replication.</title>
        <authorList>
            <person name="Beck J."/>
            <person name="Nassal M."/>
        </authorList>
    </citation>
    <scope>REVIEW</scope>
</reference>
<organismHost>
    <name type="scientific">Anas</name>
    <name type="common">ducks</name>
    <dbReference type="NCBI Taxonomy" id="8835"/>
</organismHost>
<keyword id="KW-0235">DNA replication</keyword>
<keyword id="KW-0238">DNA-binding</keyword>
<keyword id="KW-0239">DNA-directed DNA polymerase</keyword>
<keyword id="KW-0255">Endonuclease</keyword>
<keyword id="KW-0378">Hydrolase</keyword>
<keyword id="KW-0460">Magnesium</keyword>
<keyword id="KW-0479">Metal-binding</keyword>
<keyword id="KW-0511">Multifunctional enzyme</keyword>
<keyword id="KW-0540">Nuclease</keyword>
<keyword id="KW-0548">Nucleotidyltransferase</keyword>
<keyword id="KW-0695">RNA-directed DNA polymerase</keyword>
<keyword id="KW-0808">Transferase</keyword>
<dbReference type="EC" id="2.7.7.7"/>
<dbReference type="EC" id="2.7.7.49"/>
<dbReference type="EC" id="3.1.26.4"/>
<dbReference type="EMBL" id="M32990">
    <property type="protein sequence ID" value="AAA45754.1"/>
    <property type="molecule type" value="Genomic_DNA"/>
</dbReference>
<dbReference type="PIR" id="A33746">
    <property type="entry name" value="JDVLBD"/>
</dbReference>
<dbReference type="Proteomes" id="UP000008682">
    <property type="component" value="Genome"/>
</dbReference>
<dbReference type="GO" id="GO:0003677">
    <property type="term" value="F:DNA binding"/>
    <property type="evidence" value="ECO:0007669"/>
    <property type="project" value="UniProtKB-KW"/>
</dbReference>
<dbReference type="GO" id="GO:0003887">
    <property type="term" value="F:DNA-directed DNA polymerase activity"/>
    <property type="evidence" value="ECO:0007669"/>
    <property type="project" value="UniProtKB-KW"/>
</dbReference>
<dbReference type="GO" id="GO:0046872">
    <property type="term" value="F:metal ion binding"/>
    <property type="evidence" value="ECO:0007669"/>
    <property type="project" value="UniProtKB-KW"/>
</dbReference>
<dbReference type="GO" id="GO:0003964">
    <property type="term" value="F:RNA-directed DNA polymerase activity"/>
    <property type="evidence" value="ECO:0007669"/>
    <property type="project" value="UniProtKB-KW"/>
</dbReference>
<dbReference type="GO" id="GO:0004523">
    <property type="term" value="F:RNA-DNA hybrid ribonuclease activity"/>
    <property type="evidence" value="ECO:0007669"/>
    <property type="project" value="UniProtKB-EC"/>
</dbReference>
<dbReference type="GO" id="GO:0006260">
    <property type="term" value="P:DNA replication"/>
    <property type="evidence" value="ECO:0007669"/>
    <property type="project" value="UniProtKB-KW"/>
</dbReference>
<dbReference type="FunFam" id="3.30.70.270:FF:000058">
    <property type="entry name" value="Protein P"/>
    <property type="match status" value="1"/>
</dbReference>
<dbReference type="Gene3D" id="3.30.70.270">
    <property type="match status" value="1"/>
</dbReference>
<dbReference type="Gene3D" id="3.10.10.10">
    <property type="entry name" value="HIV Type 1 Reverse Transcriptase, subunit A, domain 1"/>
    <property type="match status" value="1"/>
</dbReference>
<dbReference type="InterPro" id="IPR043502">
    <property type="entry name" value="DNA/RNA_pol_sf"/>
</dbReference>
<dbReference type="InterPro" id="IPR001462">
    <property type="entry name" value="DNApol_viral_C"/>
</dbReference>
<dbReference type="InterPro" id="IPR000201">
    <property type="entry name" value="DNApol_viral_N"/>
</dbReference>
<dbReference type="InterPro" id="IPR052055">
    <property type="entry name" value="Hepadnavirus_pol/RT"/>
</dbReference>
<dbReference type="InterPro" id="IPR043128">
    <property type="entry name" value="Rev_trsase/Diguanyl_cyclase"/>
</dbReference>
<dbReference type="InterPro" id="IPR000477">
    <property type="entry name" value="RT_dom"/>
</dbReference>
<dbReference type="PANTHER" id="PTHR33050">
    <property type="entry name" value="REVERSE TRANSCRIPTASE DOMAIN-CONTAINING PROTEIN"/>
    <property type="match status" value="1"/>
</dbReference>
<dbReference type="PANTHER" id="PTHR33050:SF7">
    <property type="entry name" value="RIBONUCLEASE H"/>
    <property type="match status" value="1"/>
</dbReference>
<dbReference type="Pfam" id="PF00336">
    <property type="entry name" value="DNA_pol_viral_C"/>
    <property type="match status" value="1"/>
</dbReference>
<dbReference type="Pfam" id="PF00242">
    <property type="entry name" value="DNA_pol_viral_N"/>
    <property type="match status" value="1"/>
</dbReference>
<dbReference type="Pfam" id="PF00078">
    <property type="entry name" value="RVT_1"/>
    <property type="match status" value="1"/>
</dbReference>
<dbReference type="SUPFAM" id="SSF56672">
    <property type="entry name" value="DNA/RNA polymerases"/>
    <property type="match status" value="1"/>
</dbReference>
<dbReference type="PROSITE" id="PS50878">
    <property type="entry name" value="RT_POL"/>
    <property type="match status" value="1"/>
</dbReference>
<gene>
    <name type="primary">P</name>
</gene>
<accession>P17192</accession>
<proteinExistence type="inferred from homology"/>
<sequence>MPQPLKQSLDQSRWLREAEKHLRELENLVDSNLEEEKLKPQLSMGEDVQSPGIGEPLHPNVRAPLSHVVRAATIDLPRLGNKLPAKHHLGKLSGLYQMKGCTFNPEWKVPDISDTHFDLQVINECPSRNWKYLTPAKFWPKSISYFPVQAGVKAKYPDNVMQHEAIVGKYLNRLYEAGILYKRISKHLVTFKGKPYNWELQYLVKQHQVPDGTTTSKINGRAENRRRRAPAKSISRPHDSERDCNMVGQISNNRSSIRPCANNGGGKHYATTRRLACWGGKTIGTDQSYSSRDTSATVDSRGRSESSRGFSTISGRKATGNHHHCSNVTNSVETTTRGRSTPGKQVVTRDSSALPESRASRACHKDSSPQKEENAWYLRGNTSWPNRITGKLFLVDKNSRNTTEARLVVDFSQFSKGKNAMRFPRYWSPNLSTLRRILPVGMPRISLDLSQAFYHLPLNPASSSRLAVSDGQHVYYFRKAPMGVGLSPFLLHLFTTALGSEIARRFNIWTFTYMDDFLLCHPNARHLNSISHAVCSFLQELGIRINFDKTTPSPVNDIRFLGYQIDQKFMKIEESRWKELRTVIKKIKIGAWYDWKCIQRFVGHLNFVLPFTKGNIEMLKPMYAAITNKVNFSFSSAYRTLLYKLTMGVCKLAIRPKSSVPLPRVATDATPTHGAISHITGGSAVFAFSKVRDIHIQELLMVCLAKIMIKPRCILSDSTFVCHKRYQTLPWHFAMLAKQLLSPIQLYFVPSKYNPADGPSRHKPPDWTALTYTPLSKAIYIPHRLCGT</sequence>
<comment type="function">
    <text evidence="1">Multifunctional enzyme that converts the viral RNA genome into dsDNA in viral cytoplasmic capsids. This enzyme displays a DNA polymerase activity that can copy either DNA or RNA templates, and a ribonuclease H (RNase H) activity that cleaves the RNA strand of RNA-DNA heteroduplexes in a partially processive 3'- to 5'-endonucleasic mode. Neo-synthesized pregenomic RNA (pgRNA) are encapsidated together with the P protein, and reverse-transcribed inside the nucleocapsid. Initiation of reverse-transcription occurs first by binding the epsilon loop on the pgRNA genome, and is initiated by protein priming, thereby the 5'-end of (-)DNA is covalently linked to P protein. Partial (+)DNA is synthesized from the (-)DNA template and generates the relaxed circular DNA (RC-DNA) genome. After budding and infection, the RC-DNA migrates in the nucleus, and is converted into a plasmid-like covalently closed circular DNA (cccDNA). The activity of P protein does not seem to be necessary for cccDNA generation, and is presumably released from (+)DNA by host nuclear DNA repair machinery (By similarity).</text>
</comment>
<comment type="catalytic activity">
    <reaction evidence="2">
        <text>DNA(n) + a 2'-deoxyribonucleoside 5'-triphosphate = DNA(n+1) + diphosphate</text>
        <dbReference type="Rhea" id="RHEA:22508"/>
        <dbReference type="Rhea" id="RHEA-COMP:17339"/>
        <dbReference type="Rhea" id="RHEA-COMP:17340"/>
        <dbReference type="ChEBI" id="CHEBI:33019"/>
        <dbReference type="ChEBI" id="CHEBI:61560"/>
        <dbReference type="ChEBI" id="CHEBI:173112"/>
        <dbReference type="EC" id="2.7.7.7"/>
    </reaction>
</comment>
<comment type="catalytic activity">
    <reaction evidence="2">
        <text>DNA(n) + a 2'-deoxyribonucleoside 5'-triphosphate = DNA(n+1) + diphosphate</text>
        <dbReference type="Rhea" id="RHEA:22508"/>
        <dbReference type="Rhea" id="RHEA-COMP:17339"/>
        <dbReference type="Rhea" id="RHEA-COMP:17340"/>
        <dbReference type="ChEBI" id="CHEBI:33019"/>
        <dbReference type="ChEBI" id="CHEBI:61560"/>
        <dbReference type="ChEBI" id="CHEBI:173112"/>
        <dbReference type="EC" id="2.7.7.49"/>
    </reaction>
</comment>
<comment type="catalytic activity">
    <reaction>
        <text>Endonucleolytic cleavage to 5'-phosphomonoester.</text>
        <dbReference type="EC" id="3.1.26.4"/>
    </reaction>
</comment>
<comment type="activity regulation">
    <text>Activated by host HSP70 and HSP40 in vitro to be able to bind the epsilon loop of the pgRNA. Because deletion of the RNase H region renders the protein partly chaperone-independent, the chaperones may be needed indirectly to relieve occlusion of the RNA-binding site by this domain.</text>
</comment>
<comment type="domain">
    <text evidence="1">Terminal protein domain (TP) is hepadnavirus-specific. Spacer domain is highly variable and separates the TP and RT domains. Polymerase/reverse-transcriptase domain (RT) and ribonuclease H domain (RH) are similar to retrovirus reverse transcriptase/RNase H (By similarity).</text>
</comment>
<comment type="domain">
    <text evidence="1">The polymerase/reverse transcriptase (RT) and ribonuclease H (RH) domains are structured in five subdomains: finger, palm, thumb, connection and RNase H. Within the palm subdomain, the 'primer grip' region is thought to be involved in the positioning of the primer terminus for accommodating the incoming nucleotide. The RH domain stabilizes the association of RT with primer-template (By similarity).</text>
</comment>
<comment type="similarity">
    <text evidence="4">Belongs to the hepadnaviridae P protein family.</text>
</comment>
<evidence type="ECO:0000250" key="1"/>
<evidence type="ECO:0000255" key="2">
    <source>
        <dbReference type="PROSITE-ProRule" id="PRU00405"/>
    </source>
</evidence>
<evidence type="ECO:0000256" key="3">
    <source>
        <dbReference type="SAM" id="MobiDB-lite"/>
    </source>
</evidence>
<evidence type="ECO:0000305" key="4"/>